<reference key="1">
    <citation type="journal article" date="2005" name="Proteins">
        <title>A novel strategy for the identification of toxinlike structures in spider venom.</title>
        <authorList>
            <person name="Kozlov S.A."/>
            <person name="Malyavka A."/>
            <person name="McCutchen B."/>
            <person name="Lu A."/>
            <person name="Schepers E."/>
            <person name="Herrmann R."/>
            <person name="Grishin E.V."/>
        </authorList>
    </citation>
    <scope>NUCLEOTIDE SEQUENCE [MRNA]</scope>
    <source>
        <tissue>Venom gland</tissue>
    </source>
</reference>
<keyword id="KW-0027">Amidation</keyword>
<keyword id="KW-1015">Disulfide bond</keyword>
<keyword id="KW-0872">Ion channel impairing toxin</keyword>
<keyword id="KW-0960">Knottin</keyword>
<keyword id="KW-0528">Neurotoxin</keyword>
<keyword id="KW-0638">Presynaptic neurotoxin</keyword>
<keyword id="KW-0964">Secreted</keyword>
<keyword id="KW-0732">Signal</keyword>
<keyword id="KW-0800">Toxin</keyword>
<keyword id="KW-0738">Voltage-gated sodium channel impairing toxin</keyword>
<protein>
    <recommendedName>
        <fullName evidence="5">U3-agatoxin-Ao1e</fullName>
        <shortName evidence="5">U3-AGTX-Ao1e</shortName>
    </recommendedName>
    <alternativeName>
        <fullName evidence="7">Mu-2Aga_06</fullName>
    </alternativeName>
</protein>
<proteinExistence type="evidence at transcript level"/>
<sequence>MRTIISLLLLSAMVFAVIEAISLEEGLQLFEGERGCVGENQQCADWAGPHCCSGYYCTCRYFPKCICVNDNGK</sequence>
<comment type="function">
    <text evidence="1">Insecticidal neurotoxin that induces an irreversible spastic paralysis when injected into insects. Modifies presynaptic voltage-gated sodium channels (Nav), causing them to open at the normal resting potential of the nerve. This leads to spontaneous release of neurotransmitter and repetitive action potentials in motor neurons (By similarity).</text>
</comment>
<comment type="subcellular location">
    <subcellularLocation>
        <location evidence="1">Secreted</location>
    </subcellularLocation>
</comment>
<comment type="tissue specificity">
    <text>Expressed by the venom gland.</text>
</comment>
<comment type="domain">
    <text evidence="1">The presence of a 'disulfide through disulfide knot' structurally defines this protein as a knottin.</text>
</comment>
<comment type="similarity">
    <text evidence="5">Belongs to the neurotoxin 07 (Beta/delta-agtx) family. 03 (aga-4) subfamily. Aga sub-subfamily.</text>
</comment>
<organism>
    <name type="scientific">Agelena orientalis</name>
    <name type="common">Funnel-web spider</name>
    <dbReference type="NCBI Taxonomy" id="293813"/>
    <lineage>
        <taxon>Eukaryota</taxon>
        <taxon>Metazoa</taxon>
        <taxon>Ecdysozoa</taxon>
        <taxon>Arthropoda</taxon>
        <taxon>Chelicerata</taxon>
        <taxon>Arachnida</taxon>
        <taxon>Araneae</taxon>
        <taxon>Araneomorphae</taxon>
        <taxon>Entelegynae</taxon>
        <taxon>Agelenidae</taxon>
        <taxon>Agelena</taxon>
    </lineage>
</organism>
<feature type="signal peptide" evidence="4">
    <location>
        <begin position="1"/>
        <end position="20"/>
    </location>
</feature>
<feature type="propeptide" id="PRO_5000093663" evidence="6">
    <location>
        <begin position="21"/>
        <end position="34"/>
    </location>
</feature>
<feature type="chain" id="PRO_5000093664" description="U3-agatoxin-Ao1e" evidence="6">
    <location>
        <begin position="35"/>
        <end position="71"/>
    </location>
</feature>
<feature type="modified residue" description="Asparagine amide" evidence="3">
    <location>
        <position position="71"/>
    </location>
</feature>
<feature type="disulfide bond" evidence="2">
    <location>
        <begin position="36"/>
        <end position="52"/>
    </location>
</feature>
<feature type="disulfide bond" evidence="2">
    <location>
        <begin position="43"/>
        <end position="57"/>
    </location>
</feature>
<feature type="disulfide bond" evidence="2">
    <location>
        <begin position="51"/>
        <end position="67"/>
    </location>
</feature>
<feature type="disulfide bond" evidence="2">
    <location>
        <begin position="59"/>
        <end position="65"/>
    </location>
</feature>
<dbReference type="EMBL" id="AY681330">
    <property type="protein sequence ID" value="AAU87890.1"/>
    <property type="molecule type" value="mRNA"/>
</dbReference>
<dbReference type="SMR" id="Q5Y4V4"/>
<dbReference type="ArachnoServer" id="AS000082">
    <property type="toxin name" value="U3-agatoxin-Ao1e"/>
</dbReference>
<dbReference type="GO" id="GO:0005576">
    <property type="term" value="C:extracellular region"/>
    <property type="evidence" value="ECO:0007669"/>
    <property type="project" value="UniProtKB-SubCell"/>
</dbReference>
<dbReference type="GO" id="GO:0044231">
    <property type="term" value="C:host cell presynaptic membrane"/>
    <property type="evidence" value="ECO:0007669"/>
    <property type="project" value="UniProtKB-KW"/>
</dbReference>
<dbReference type="GO" id="GO:0017080">
    <property type="term" value="F:sodium channel regulator activity"/>
    <property type="evidence" value="ECO:0007669"/>
    <property type="project" value="UniProtKB-KW"/>
</dbReference>
<dbReference type="GO" id="GO:0090729">
    <property type="term" value="F:toxin activity"/>
    <property type="evidence" value="ECO:0007669"/>
    <property type="project" value="UniProtKB-KW"/>
</dbReference>
<dbReference type="InterPro" id="IPR016328">
    <property type="entry name" value="Beta/delta-agatoxin_fam"/>
</dbReference>
<dbReference type="Pfam" id="PF05980">
    <property type="entry name" value="Toxin_7"/>
    <property type="match status" value="1"/>
</dbReference>
<dbReference type="SUPFAM" id="SSF57059">
    <property type="entry name" value="omega toxin-like"/>
    <property type="match status" value="1"/>
</dbReference>
<dbReference type="PROSITE" id="PS60015">
    <property type="entry name" value="MU_AGATOXIN"/>
    <property type="match status" value="1"/>
</dbReference>
<evidence type="ECO:0000250" key="1"/>
<evidence type="ECO:0000250" key="2">
    <source>
        <dbReference type="UniProtKB" id="P11061"/>
    </source>
</evidence>
<evidence type="ECO:0000250" key="3">
    <source>
        <dbReference type="UniProtKB" id="Q5Y4V3"/>
    </source>
</evidence>
<evidence type="ECO:0000255" key="4"/>
<evidence type="ECO:0000305" key="5"/>
<evidence type="ECO:0000305" key="6">
    <source>
    </source>
</evidence>
<evidence type="ECO:0000312" key="7">
    <source>
        <dbReference type="EMBL" id="AAU87890.1"/>
    </source>
</evidence>
<accession>Q5Y4V4</accession>
<name>T4G1E_AGEOR</name>